<sequence>MASTDNSRALTLLPAVDVADGQAVRLVQGAAGTETSYGAPIEAALAWQNAGAEWIHLVDLDAAFGRGSNFELLKEVTGQLDVNVELSGGIRDDESLERALSTGCRRVNIGTAALEDPEWCESVISRYGDKVAIGLDTREVDGEWRLRGRGWTSDGGELWEVLERLDSQGVSRLVVTDVSRDGMLNGPNIDLLREVAAATDAPVVASGGISSLDDIRALAAVVHEGVDSAIVGKALYAGKFTLEEALEAAQGVARGSDI</sequence>
<evidence type="ECO:0000255" key="1">
    <source>
        <dbReference type="HAMAP-Rule" id="MF_01014"/>
    </source>
</evidence>
<reference key="1">
    <citation type="journal article" date="2005" name="J. Bacteriol.">
        <title>Complete genome sequence and analysis of the multiresistant nosocomial pathogen Corynebacterium jeikeium K411, a lipid-requiring bacterium of the human skin flora.</title>
        <authorList>
            <person name="Tauch A."/>
            <person name="Kaiser O."/>
            <person name="Hain T."/>
            <person name="Goesmann A."/>
            <person name="Weisshaar B."/>
            <person name="Albersmeier A."/>
            <person name="Bekel T."/>
            <person name="Bischoff N."/>
            <person name="Brune I."/>
            <person name="Chakraborty T."/>
            <person name="Kalinowski J."/>
            <person name="Meyer F."/>
            <person name="Rupp O."/>
            <person name="Schneiker S."/>
            <person name="Viehoever P."/>
            <person name="Puehler A."/>
        </authorList>
    </citation>
    <scope>NUCLEOTIDE SEQUENCE [LARGE SCALE GENOMIC DNA]</scope>
    <source>
        <strain>K411</strain>
    </source>
</reference>
<feature type="chain" id="PRO_0000229052" description="1-(5-phosphoribosyl)-5-[(5-phosphoribosylamino)methylideneamino] imidazole-4-carboxamide isomerase">
    <location>
        <begin position="1"/>
        <end position="258"/>
    </location>
</feature>
<feature type="active site" description="Proton acceptor" evidence="1">
    <location>
        <position position="17"/>
    </location>
</feature>
<feature type="active site" description="Proton donor" evidence="1">
    <location>
        <position position="136"/>
    </location>
</feature>
<gene>
    <name evidence="1" type="primary">hisA</name>
    <name type="ordered locus">jk0791</name>
</gene>
<accession>Q4JW54</accession>
<keyword id="KW-0028">Amino-acid biosynthesis</keyword>
<keyword id="KW-0963">Cytoplasm</keyword>
<keyword id="KW-0368">Histidine biosynthesis</keyword>
<keyword id="KW-0413">Isomerase</keyword>
<keyword id="KW-1185">Reference proteome</keyword>
<name>HIS4_CORJK</name>
<comment type="catalytic activity">
    <reaction evidence="1">
        <text>1-(5-phospho-beta-D-ribosyl)-5-[(5-phospho-beta-D-ribosylamino)methylideneamino]imidazole-4-carboxamide = 5-[(5-phospho-1-deoxy-D-ribulos-1-ylimino)methylamino]-1-(5-phospho-beta-D-ribosyl)imidazole-4-carboxamide</text>
        <dbReference type="Rhea" id="RHEA:15469"/>
        <dbReference type="ChEBI" id="CHEBI:58435"/>
        <dbReference type="ChEBI" id="CHEBI:58525"/>
        <dbReference type="EC" id="5.3.1.16"/>
    </reaction>
</comment>
<comment type="pathway">
    <text evidence="1">Amino-acid biosynthesis; L-histidine biosynthesis; L-histidine from 5-phospho-alpha-D-ribose 1-diphosphate: step 4/9.</text>
</comment>
<comment type="subcellular location">
    <subcellularLocation>
        <location evidence="1">Cytoplasm</location>
    </subcellularLocation>
</comment>
<comment type="similarity">
    <text evidence="1">Belongs to the HisA/HisF family.</text>
</comment>
<organism>
    <name type="scientific">Corynebacterium jeikeium (strain K411)</name>
    <dbReference type="NCBI Taxonomy" id="306537"/>
    <lineage>
        <taxon>Bacteria</taxon>
        <taxon>Bacillati</taxon>
        <taxon>Actinomycetota</taxon>
        <taxon>Actinomycetes</taxon>
        <taxon>Mycobacteriales</taxon>
        <taxon>Corynebacteriaceae</taxon>
        <taxon>Corynebacterium</taxon>
    </lineage>
</organism>
<dbReference type="EC" id="5.3.1.16" evidence="1"/>
<dbReference type="EMBL" id="CR931997">
    <property type="protein sequence ID" value="CAI36953.1"/>
    <property type="molecule type" value="Genomic_DNA"/>
</dbReference>
<dbReference type="RefSeq" id="WP_011273396.1">
    <property type="nucleotide sequence ID" value="NC_007164.1"/>
</dbReference>
<dbReference type="SMR" id="Q4JW54"/>
<dbReference type="STRING" id="306537.jk0791"/>
<dbReference type="KEGG" id="cjk:jk0791"/>
<dbReference type="PATRIC" id="fig|306537.10.peg.800"/>
<dbReference type="eggNOG" id="COG0106">
    <property type="taxonomic scope" value="Bacteria"/>
</dbReference>
<dbReference type="HOGENOM" id="CLU_048577_1_1_11"/>
<dbReference type="OrthoDB" id="9807749at2"/>
<dbReference type="UniPathway" id="UPA00031">
    <property type="reaction ID" value="UER00009"/>
</dbReference>
<dbReference type="Proteomes" id="UP000000545">
    <property type="component" value="Chromosome"/>
</dbReference>
<dbReference type="GO" id="GO:0005737">
    <property type="term" value="C:cytoplasm"/>
    <property type="evidence" value="ECO:0007669"/>
    <property type="project" value="UniProtKB-SubCell"/>
</dbReference>
<dbReference type="GO" id="GO:0003949">
    <property type="term" value="F:1-(5-phosphoribosyl)-5-[(5-phosphoribosylamino)methylideneamino]imidazole-4-carboxamide isomerase activity"/>
    <property type="evidence" value="ECO:0007669"/>
    <property type="project" value="UniProtKB-UniRule"/>
</dbReference>
<dbReference type="GO" id="GO:0004640">
    <property type="term" value="F:phosphoribosylanthranilate isomerase activity"/>
    <property type="evidence" value="ECO:0007669"/>
    <property type="project" value="InterPro"/>
</dbReference>
<dbReference type="GO" id="GO:0000105">
    <property type="term" value="P:L-histidine biosynthetic process"/>
    <property type="evidence" value="ECO:0007669"/>
    <property type="project" value="UniProtKB-UniRule"/>
</dbReference>
<dbReference type="GO" id="GO:0000162">
    <property type="term" value="P:L-tryptophan biosynthetic process"/>
    <property type="evidence" value="ECO:0007669"/>
    <property type="project" value="InterPro"/>
</dbReference>
<dbReference type="CDD" id="cd04732">
    <property type="entry name" value="HisA"/>
    <property type="match status" value="1"/>
</dbReference>
<dbReference type="FunFam" id="3.20.20.70:FF:000009">
    <property type="entry name" value="1-(5-phosphoribosyl)-5-[(5-phosphoribosylamino)methylideneamino] imidazole-4-carboxamide isomerase"/>
    <property type="match status" value="1"/>
</dbReference>
<dbReference type="Gene3D" id="3.20.20.70">
    <property type="entry name" value="Aldolase class I"/>
    <property type="match status" value="1"/>
</dbReference>
<dbReference type="HAMAP" id="MF_01014">
    <property type="entry name" value="HisA"/>
    <property type="match status" value="1"/>
</dbReference>
<dbReference type="InterPro" id="IPR013785">
    <property type="entry name" value="Aldolase_TIM"/>
</dbReference>
<dbReference type="InterPro" id="IPR006062">
    <property type="entry name" value="His_biosynth"/>
</dbReference>
<dbReference type="InterPro" id="IPR010188">
    <property type="entry name" value="HisA/PriA_Actinobacteria"/>
</dbReference>
<dbReference type="InterPro" id="IPR044524">
    <property type="entry name" value="Isoase_HisA-like"/>
</dbReference>
<dbReference type="InterPro" id="IPR023016">
    <property type="entry name" value="Isoase_HisA-like_bact"/>
</dbReference>
<dbReference type="InterPro" id="IPR011060">
    <property type="entry name" value="RibuloseP-bd_barrel"/>
</dbReference>
<dbReference type="NCBIfam" id="TIGR01919">
    <property type="entry name" value="hisA-trpF"/>
    <property type="match status" value="1"/>
</dbReference>
<dbReference type="PANTHER" id="PTHR43090">
    <property type="entry name" value="1-(5-PHOSPHORIBOSYL)-5-[(5-PHOSPHORIBOSYLAMINO)METHYLIDENEAMINO] IMIDAZOLE-4-CARBOXAMIDE ISOMERASE"/>
    <property type="match status" value="1"/>
</dbReference>
<dbReference type="PANTHER" id="PTHR43090:SF2">
    <property type="entry name" value="1-(5-PHOSPHORIBOSYL)-5-[(5-PHOSPHORIBOSYLAMINO)METHYLIDENEAMINO] IMIDAZOLE-4-CARBOXAMIDE ISOMERASE"/>
    <property type="match status" value="1"/>
</dbReference>
<dbReference type="Pfam" id="PF00977">
    <property type="entry name" value="His_biosynth"/>
    <property type="match status" value="1"/>
</dbReference>
<dbReference type="SUPFAM" id="SSF51366">
    <property type="entry name" value="Ribulose-phoshate binding barrel"/>
    <property type="match status" value="1"/>
</dbReference>
<protein>
    <recommendedName>
        <fullName evidence="1">1-(5-phosphoribosyl)-5-[(5-phosphoribosylamino)methylideneamino] imidazole-4-carboxamide isomerase</fullName>
        <ecNumber evidence="1">5.3.1.16</ecNumber>
    </recommendedName>
    <alternativeName>
        <fullName evidence="1">Phosphoribosylformimino-5-aminoimidazole carboxamide ribotide isomerase</fullName>
    </alternativeName>
</protein>
<proteinExistence type="inferred from homology"/>